<organism>
    <name type="scientific">Selaginella moellendorffii</name>
    <name type="common">Spikemoss</name>
    <dbReference type="NCBI Taxonomy" id="88036"/>
    <lineage>
        <taxon>Eukaryota</taxon>
        <taxon>Viridiplantae</taxon>
        <taxon>Streptophyta</taxon>
        <taxon>Embryophyta</taxon>
        <taxon>Tracheophyta</taxon>
        <taxon>Lycopodiopsida</taxon>
        <taxon>Selaginellales</taxon>
        <taxon>Selaginellaceae</taxon>
        <taxon>Selaginella</taxon>
    </lineage>
</organism>
<dbReference type="EC" id="4.2.3.137"/>
<dbReference type="EMBL" id="JX413787">
    <property type="protein sequence ID" value="AFR34007.1"/>
    <property type="molecule type" value="mRNA"/>
</dbReference>
<dbReference type="EMBL" id="GL377589">
    <property type="protein sequence ID" value="EFJ24463.1"/>
    <property type="status" value="ALT_SEQ"/>
    <property type="molecule type" value="Genomic_DNA"/>
</dbReference>
<dbReference type="RefSeq" id="XP_002974241.1">
    <property type="nucleotide sequence ID" value="XM_002974195.1"/>
</dbReference>
<dbReference type="SMR" id="J9QS25"/>
<dbReference type="KEGG" id="smo:SELMODRAFT_414574"/>
<dbReference type="eggNOG" id="ENOG502T11A">
    <property type="taxonomic scope" value="Eukaryota"/>
</dbReference>
<dbReference type="InParanoid" id="J9QS25"/>
<dbReference type="OrthoDB" id="2861623at2759"/>
<dbReference type="UniPathway" id="UPA00213"/>
<dbReference type="Proteomes" id="UP000001514">
    <property type="component" value="Unassembled WGS sequence"/>
</dbReference>
<dbReference type="GO" id="GO:0046872">
    <property type="term" value="F:metal ion binding"/>
    <property type="evidence" value="ECO:0007669"/>
    <property type="project" value="UniProtKB-KW"/>
</dbReference>
<dbReference type="GO" id="GO:0010333">
    <property type="term" value="F:terpene synthase activity"/>
    <property type="evidence" value="ECO:0007669"/>
    <property type="project" value="InterPro"/>
</dbReference>
<dbReference type="GO" id="GO:0016114">
    <property type="term" value="P:terpenoid biosynthetic process"/>
    <property type="evidence" value="ECO:0007669"/>
    <property type="project" value="UniProtKB-UniPathway"/>
</dbReference>
<dbReference type="Gene3D" id="1.10.600.10">
    <property type="entry name" value="Farnesyl Diphosphate Synthase"/>
    <property type="match status" value="1"/>
</dbReference>
<dbReference type="InterPro" id="IPR008949">
    <property type="entry name" value="Isoprenoid_synthase_dom_sf"/>
</dbReference>
<dbReference type="InterPro" id="IPR034686">
    <property type="entry name" value="Terpene_cyclase-like_2"/>
</dbReference>
<dbReference type="PANTHER" id="PTHR35201:SF4">
    <property type="entry name" value="BETA-PINACENE SYNTHASE-RELATED"/>
    <property type="match status" value="1"/>
</dbReference>
<dbReference type="PANTHER" id="PTHR35201">
    <property type="entry name" value="TERPENE SYNTHASE"/>
    <property type="match status" value="1"/>
</dbReference>
<dbReference type="Pfam" id="PF19086">
    <property type="entry name" value="Terpene_syn_C_2"/>
    <property type="match status" value="1"/>
</dbReference>
<dbReference type="SFLD" id="SFLDS00005">
    <property type="entry name" value="Isoprenoid_Synthase_Type_I"/>
    <property type="match status" value="1"/>
</dbReference>
<dbReference type="SFLD" id="SFLDG01020">
    <property type="entry name" value="Terpene_Cyclase_Like_2"/>
    <property type="match status" value="1"/>
</dbReference>
<dbReference type="SUPFAM" id="SSF48576">
    <property type="entry name" value="Terpenoid synthases"/>
    <property type="match status" value="1"/>
</dbReference>
<name>MTS26_SELML</name>
<proteinExistence type="evidence at protein level"/>
<comment type="function">
    <text evidence="2">Sesquiterpene synthase converting farnesyl diphosphate to (E)-2-epi-beta-caryophyllene as the major product, and to two other unidentified sesquiterpenes. Has no diterpene synthase activity.</text>
</comment>
<comment type="catalytic activity">
    <reaction evidence="2">
        <text>(2E,6E)-farnesyl diphosphate = (E)-2-epi-beta-caryophyllene + diphosphate</text>
        <dbReference type="Rhea" id="RHEA:34703"/>
        <dbReference type="ChEBI" id="CHEBI:33019"/>
        <dbReference type="ChEBI" id="CHEBI:68667"/>
        <dbReference type="ChEBI" id="CHEBI:175763"/>
        <dbReference type="EC" id="4.2.3.137"/>
    </reaction>
</comment>
<comment type="cofactor">
    <cofactor evidence="1">
        <name>Mg(2+)</name>
        <dbReference type="ChEBI" id="CHEBI:18420"/>
    </cofactor>
    <cofactor evidence="1">
        <name>Mn(2+)</name>
        <dbReference type="ChEBI" id="CHEBI:29035"/>
    </cofactor>
    <text evidence="1">Binds 3 Mg(2+) or Mn(2+) ions per subunit.</text>
</comment>
<comment type="pathway">
    <text>Secondary metabolite biosynthesis; terpenoid biosynthesis.</text>
</comment>
<comment type="induction">
    <text evidence="2">Not regulated by alamethicin treatment.</text>
</comment>
<comment type="domain">
    <text evidence="1">The Asp-Asp-Xaa-Xaa-Asp/Glu (DDXXD/E) motif is important for the catalytic activity, presumably through binding to Mg(2+).</text>
</comment>
<comment type="miscellaneous">
    <text>Selaginella moellendorffii contains two distinct types of functional terpene synthases (TPS) genes, the typical seed plants TPS genes (SmTPSs) and a microbial type TPS genes (SmMTPSLs).</text>
</comment>
<comment type="similarity">
    <text evidence="3">Belongs to the terpene synthase family.</text>
</comment>
<comment type="sequence caution" evidence="3">
    <conflict type="erroneous gene model prediction">
        <sequence resource="EMBL-CDS" id="EFJ24463"/>
    </conflict>
</comment>
<evidence type="ECO:0000250" key="1"/>
<evidence type="ECO:0000269" key="2">
    <source>
    </source>
</evidence>
<evidence type="ECO:0000305" key="3"/>
<gene>
    <name type="ORF">SELMODRAFT_414574</name>
</gene>
<protein>
    <recommendedName>
        <fullName>(E)-2-epi-beta-caryophyllene synthase</fullName>
        <ecNumber>4.2.3.137</ecNumber>
    </recommendedName>
    <alternativeName>
        <fullName>Microbial Terpene synthase-like protein 26</fullName>
        <shortName>SmMTPSL26</shortName>
    </alternativeName>
</protein>
<keyword id="KW-0456">Lyase</keyword>
<keyword id="KW-0460">Magnesium</keyword>
<keyword id="KW-0479">Metal-binding</keyword>
<keyword id="KW-1185">Reference proteome</keyword>
<accession>J9QS25</accession>
<accession>D8RT78</accession>
<sequence>MEDVLAEKLSRVCKFDLPFIPCSIPFECHPDFTRISKDTDAWALRMLSITDPYERKKALQGRHSLYSPMIIPRGESSKAELSSKHTWTMFVLDDIAENFSEQEGKKAIDILLEVAEGSYVLSEKEKEKHPSHAMFEEVMSSFRSLMDPPLFARYMNCLRNYLDSVVEEASLRIAKSIPSLEKYRLLRRETSFMEADGGIMCEFCMDLKLHKSVVESPDFVAFVKAVIDHVVLVNDLLSFRHELKIKCFHNYLCVIFCHSPDNTSFQETVDKVCEMIQEAEAEILQLQQKLIKLGEETGDKDLVEYATWYPCVASGNLRWSYVTGRYHGLDNPLLNGEPFQGTWFLHPEATLILPLGSKCGNHPFITI</sequence>
<feature type="chain" id="PRO_0000421944" description="(E)-2-epi-beta-caryophyllene synthase">
    <location>
        <begin position="1"/>
        <end position="367"/>
    </location>
</feature>
<feature type="short sequence motif" description="DDXXE motif">
    <location>
        <begin position="93"/>
        <end position="97"/>
    </location>
</feature>
<feature type="binding site" evidence="1">
    <location>
        <position position="93"/>
    </location>
    <ligand>
        <name>Mg(2+)</name>
        <dbReference type="ChEBI" id="CHEBI:18420"/>
        <label>1</label>
    </ligand>
</feature>
<feature type="binding site" evidence="1">
    <location>
        <position position="93"/>
    </location>
    <ligand>
        <name>Mg(2+)</name>
        <dbReference type="ChEBI" id="CHEBI:18420"/>
        <label>2</label>
    </ligand>
</feature>
<feature type="binding site" evidence="1">
    <location>
        <position position="234"/>
    </location>
    <ligand>
        <name>Mg(2+)</name>
        <dbReference type="ChEBI" id="CHEBI:18420"/>
        <label>3</label>
    </ligand>
</feature>
<feature type="binding site" evidence="1">
    <location>
        <position position="238"/>
    </location>
    <ligand>
        <name>Mg(2+)</name>
        <dbReference type="ChEBI" id="CHEBI:18420"/>
        <label>3</label>
    </ligand>
</feature>
<feature type="sequence conflict" description="In Ref. 1; AFR34007." evidence="3" ref="1">
    <original>T</original>
    <variation>M</variation>
    <location>
        <position position="366"/>
    </location>
</feature>
<reference key="1">
    <citation type="journal article" date="2012" name="Proc. Natl. Acad. Sci. U.S.A.">
        <title>Nonseed plant Selaginella moellendorfii has both seed plant and microbial types of terpene synthases.</title>
        <authorList>
            <person name="Li G."/>
            <person name="Kollner T.G."/>
            <person name="Yin Y."/>
            <person name="Jiang Y."/>
            <person name="Chen H."/>
            <person name="Xu Y."/>
            <person name="Gershenzon J."/>
            <person name="Pichersky E."/>
            <person name="Chen F."/>
        </authorList>
    </citation>
    <scope>NUCLEOTIDE SEQUENCE [MRNA]</scope>
    <scope>FUNCTION</scope>
    <scope>CATALYTIC ACTIVITY</scope>
    <scope>INDUCTION BY ELICITOR</scope>
    <scope>GENE FAMILY</scope>
    <scope>NOMENCLATURE</scope>
</reference>
<reference key="2">
    <citation type="journal article" date="2011" name="Science">
        <title>The Selaginella genome identifies genetic changes associated with the evolution of vascular plants.</title>
        <authorList>
            <person name="Banks J.A."/>
            <person name="Nishiyama T."/>
            <person name="Hasebe M."/>
            <person name="Bowman J.L."/>
            <person name="Gribskov M."/>
            <person name="dePamphilis C."/>
            <person name="Albert V.A."/>
            <person name="Aono N."/>
            <person name="Aoyama T."/>
            <person name="Ambrose B.A."/>
            <person name="Ashton N.W."/>
            <person name="Axtell M.J."/>
            <person name="Barker E."/>
            <person name="Barker M.S."/>
            <person name="Bennetzen J.L."/>
            <person name="Bonawitz N.D."/>
            <person name="Chapple C."/>
            <person name="Cheng C."/>
            <person name="Correa L.G."/>
            <person name="Dacre M."/>
            <person name="DeBarry J."/>
            <person name="Dreyer I."/>
            <person name="Elias M."/>
            <person name="Engstrom E.M."/>
            <person name="Estelle M."/>
            <person name="Feng L."/>
            <person name="Finet C."/>
            <person name="Floyd S.K."/>
            <person name="Frommer W.B."/>
            <person name="Fujita T."/>
            <person name="Gramzow L."/>
            <person name="Gutensohn M."/>
            <person name="Harholt J."/>
            <person name="Hattori M."/>
            <person name="Heyl A."/>
            <person name="Hirai T."/>
            <person name="Hiwatashi Y."/>
            <person name="Ishikawa M."/>
            <person name="Iwata M."/>
            <person name="Karol K.G."/>
            <person name="Koehler B."/>
            <person name="Kolukisaoglu U."/>
            <person name="Kubo M."/>
            <person name="Kurata T."/>
            <person name="Lalonde S."/>
            <person name="Li K."/>
            <person name="Li Y."/>
            <person name="Litt A."/>
            <person name="Lyons E."/>
            <person name="Manning G."/>
            <person name="Maruyama T."/>
            <person name="Michael T.P."/>
            <person name="Mikami K."/>
            <person name="Miyazaki S."/>
            <person name="Morinaga S."/>
            <person name="Murata T."/>
            <person name="Mueller-Roeber B."/>
            <person name="Nelson D.R."/>
            <person name="Obara M."/>
            <person name="Oguri Y."/>
            <person name="Olmstead R.G."/>
            <person name="Onodera N."/>
            <person name="Petersen B.L."/>
            <person name="Pils B."/>
            <person name="Prigge M."/>
            <person name="Rensing S.A."/>
            <person name="Riano-Pachon D.M."/>
            <person name="Roberts A.W."/>
            <person name="Sato Y."/>
            <person name="Scheller H.V."/>
            <person name="Schulz B."/>
            <person name="Schulz C."/>
            <person name="Shakirov E.V."/>
            <person name="Shibagaki N."/>
            <person name="Shinohara N."/>
            <person name="Shippen D.E."/>
            <person name="Soerensen I."/>
            <person name="Sotooka R."/>
            <person name="Sugimoto N."/>
            <person name="Sugita M."/>
            <person name="Sumikawa N."/>
            <person name="Tanurdzic M."/>
            <person name="Theissen G."/>
            <person name="Ulvskov P."/>
            <person name="Wakazuki S."/>
            <person name="Weng J.K."/>
            <person name="Willats W.W."/>
            <person name="Wipf D."/>
            <person name="Wolf P.G."/>
            <person name="Yang L."/>
            <person name="Zimmer A.D."/>
            <person name="Zhu Q."/>
            <person name="Mitros T."/>
            <person name="Hellsten U."/>
            <person name="Loque D."/>
            <person name="Otillar R."/>
            <person name="Salamov A."/>
            <person name="Schmutz J."/>
            <person name="Shapiro H."/>
            <person name="Lindquist E."/>
            <person name="Lucas S."/>
            <person name="Rokhsar D."/>
            <person name="Grigoriev I.V."/>
        </authorList>
    </citation>
    <scope>NUCLEOTIDE SEQUENCE [LARGE SCALE GENOMIC DNA]</scope>
</reference>